<sequence length="185" mass="21159">MLNDVINEYEAHLKKATEALRHHLASIRTGRASAALVEHLHVEAYGTNMPLNQLANISVPEPRMIIIQPYDTGMIKAIEKAIQQSDLGLNPSNDGRIIRLPVPPLTEERRRELVKMVRHRVEEVKVSVRNQRRDAIDDLKKLEADKLISEDELHRGQERIQQLTDRCNRELDQIGAEKEAEVMAI</sequence>
<name>RRF_CHLAD</name>
<evidence type="ECO:0000255" key="1">
    <source>
        <dbReference type="HAMAP-Rule" id="MF_00040"/>
    </source>
</evidence>
<organism>
    <name type="scientific">Chloroflexus aggregans (strain MD-66 / DSM 9485)</name>
    <dbReference type="NCBI Taxonomy" id="326427"/>
    <lineage>
        <taxon>Bacteria</taxon>
        <taxon>Bacillati</taxon>
        <taxon>Chloroflexota</taxon>
        <taxon>Chloroflexia</taxon>
        <taxon>Chloroflexales</taxon>
        <taxon>Chloroflexineae</taxon>
        <taxon>Chloroflexaceae</taxon>
        <taxon>Chloroflexus</taxon>
    </lineage>
</organism>
<protein>
    <recommendedName>
        <fullName evidence="1">Ribosome-recycling factor</fullName>
        <shortName evidence="1">RRF</shortName>
    </recommendedName>
    <alternativeName>
        <fullName evidence="1">Ribosome-releasing factor</fullName>
    </alternativeName>
</protein>
<comment type="function">
    <text evidence="1">Responsible for the release of ribosomes from messenger RNA at the termination of protein biosynthesis. May increase the efficiency of translation by recycling ribosomes from one round of translation to another.</text>
</comment>
<comment type="subcellular location">
    <subcellularLocation>
        <location evidence="1">Cytoplasm</location>
    </subcellularLocation>
</comment>
<comment type="similarity">
    <text evidence="1">Belongs to the RRF family.</text>
</comment>
<feature type="chain" id="PRO_1000194911" description="Ribosome-recycling factor">
    <location>
        <begin position="1"/>
        <end position="185"/>
    </location>
</feature>
<gene>
    <name evidence="1" type="primary">frr</name>
    <name type="ordered locus">Cagg_0528</name>
</gene>
<reference key="1">
    <citation type="submission" date="2008-12" db="EMBL/GenBank/DDBJ databases">
        <title>Complete sequence of Chloroflexus aggregans DSM 9485.</title>
        <authorList>
            <consortium name="US DOE Joint Genome Institute"/>
            <person name="Lucas S."/>
            <person name="Copeland A."/>
            <person name="Lapidus A."/>
            <person name="Glavina del Rio T."/>
            <person name="Dalin E."/>
            <person name="Tice H."/>
            <person name="Pitluck S."/>
            <person name="Foster B."/>
            <person name="Larimer F."/>
            <person name="Land M."/>
            <person name="Hauser L."/>
            <person name="Kyrpides N."/>
            <person name="Mikhailova N."/>
            <person name="Bryant D.A."/>
            <person name="Richardson P."/>
        </authorList>
    </citation>
    <scope>NUCLEOTIDE SEQUENCE [LARGE SCALE GENOMIC DNA]</scope>
    <source>
        <strain>MD-66 / DSM 9485</strain>
    </source>
</reference>
<dbReference type="EMBL" id="CP001337">
    <property type="protein sequence ID" value="ACL23467.1"/>
    <property type="molecule type" value="Genomic_DNA"/>
</dbReference>
<dbReference type="RefSeq" id="WP_012615833.1">
    <property type="nucleotide sequence ID" value="NC_011831.1"/>
</dbReference>
<dbReference type="SMR" id="B8G461"/>
<dbReference type="STRING" id="326427.Cagg_0528"/>
<dbReference type="KEGG" id="cag:Cagg_0528"/>
<dbReference type="eggNOG" id="COG0233">
    <property type="taxonomic scope" value="Bacteria"/>
</dbReference>
<dbReference type="HOGENOM" id="CLU_073981_2_0_0"/>
<dbReference type="OrthoDB" id="9804006at2"/>
<dbReference type="Proteomes" id="UP000002508">
    <property type="component" value="Chromosome"/>
</dbReference>
<dbReference type="GO" id="GO:0005737">
    <property type="term" value="C:cytoplasm"/>
    <property type="evidence" value="ECO:0007669"/>
    <property type="project" value="UniProtKB-SubCell"/>
</dbReference>
<dbReference type="GO" id="GO:0043023">
    <property type="term" value="F:ribosomal large subunit binding"/>
    <property type="evidence" value="ECO:0007669"/>
    <property type="project" value="TreeGrafter"/>
</dbReference>
<dbReference type="GO" id="GO:0006415">
    <property type="term" value="P:translational termination"/>
    <property type="evidence" value="ECO:0007669"/>
    <property type="project" value="UniProtKB-UniRule"/>
</dbReference>
<dbReference type="CDD" id="cd00520">
    <property type="entry name" value="RRF"/>
    <property type="match status" value="1"/>
</dbReference>
<dbReference type="FunFam" id="1.10.132.20:FF:000001">
    <property type="entry name" value="Ribosome-recycling factor"/>
    <property type="match status" value="1"/>
</dbReference>
<dbReference type="FunFam" id="3.30.1360.40:FF:000001">
    <property type="entry name" value="Ribosome-recycling factor"/>
    <property type="match status" value="1"/>
</dbReference>
<dbReference type="Gene3D" id="3.30.1360.40">
    <property type="match status" value="1"/>
</dbReference>
<dbReference type="Gene3D" id="1.10.132.20">
    <property type="entry name" value="Ribosome-recycling factor"/>
    <property type="match status" value="1"/>
</dbReference>
<dbReference type="HAMAP" id="MF_00040">
    <property type="entry name" value="RRF"/>
    <property type="match status" value="1"/>
</dbReference>
<dbReference type="InterPro" id="IPR002661">
    <property type="entry name" value="Ribosome_recyc_fac"/>
</dbReference>
<dbReference type="InterPro" id="IPR023584">
    <property type="entry name" value="Ribosome_recyc_fac_dom"/>
</dbReference>
<dbReference type="InterPro" id="IPR036191">
    <property type="entry name" value="RRF_sf"/>
</dbReference>
<dbReference type="NCBIfam" id="TIGR00496">
    <property type="entry name" value="frr"/>
    <property type="match status" value="1"/>
</dbReference>
<dbReference type="PANTHER" id="PTHR20982:SF3">
    <property type="entry name" value="MITOCHONDRIAL RIBOSOME RECYCLING FACTOR PSEUDO 1"/>
    <property type="match status" value="1"/>
</dbReference>
<dbReference type="PANTHER" id="PTHR20982">
    <property type="entry name" value="RIBOSOME RECYCLING FACTOR"/>
    <property type="match status" value="1"/>
</dbReference>
<dbReference type="Pfam" id="PF01765">
    <property type="entry name" value="RRF"/>
    <property type="match status" value="1"/>
</dbReference>
<dbReference type="SUPFAM" id="SSF55194">
    <property type="entry name" value="Ribosome recycling factor, RRF"/>
    <property type="match status" value="1"/>
</dbReference>
<proteinExistence type="inferred from homology"/>
<accession>B8G461</accession>
<keyword id="KW-0963">Cytoplasm</keyword>
<keyword id="KW-0648">Protein biosynthesis</keyword>